<proteinExistence type="inferred from homology"/>
<feature type="chain" id="PRO_0000227617" description="Undecaprenyl-diphosphatase">
    <location>
        <begin position="1"/>
        <end position="274"/>
    </location>
</feature>
<feature type="transmembrane region" description="Helical" evidence="1">
    <location>
        <begin position="4"/>
        <end position="24"/>
    </location>
</feature>
<feature type="transmembrane region" description="Helical" evidence="1">
    <location>
        <begin position="46"/>
        <end position="63"/>
    </location>
</feature>
<feature type="transmembrane region" description="Helical" evidence="1">
    <location>
        <begin position="82"/>
        <end position="102"/>
    </location>
</feature>
<feature type="transmembrane region" description="Helical" evidence="1">
    <location>
        <begin position="109"/>
        <end position="129"/>
    </location>
</feature>
<feature type="transmembrane region" description="Helical" evidence="1">
    <location>
        <begin position="184"/>
        <end position="204"/>
    </location>
</feature>
<feature type="transmembrane region" description="Helical" evidence="1">
    <location>
        <begin position="218"/>
        <end position="238"/>
    </location>
</feature>
<feature type="transmembrane region" description="Helical" evidence="1">
    <location>
        <begin position="249"/>
        <end position="269"/>
    </location>
</feature>
<keyword id="KW-0046">Antibiotic resistance</keyword>
<keyword id="KW-0997">Cell inner membrane</keyword>
<keyword id="KW-1003">Cell membrane</keyword>
<keyword id="KW-0133">Cell shape</keyword>
<keyword id="KW-0961">Cell wall biogenesis/degradation</keyword>
<keyword id="KW-0378">Hydrolase</keyword>
<keyword id="KW-0472">Membrane</keyword>
<keyword id="KW-0573">Peptidoglycan synthesis</keyword>
<keyword id="KW-0812">Transmembrane</keyword>
<keyword id="KW-1133">Transmembrane helix</keyword>
<protein>
    <recommendedName>
        <fullName evidence="1">Undecaprenyl-diphosphatase</fullName>
        <ecNumber evidence="1">3.6.1.27</ecNumber>
    </recommendedName>
    <alternativeName>
        <fullName evidence="1">Bacitracin resistance protein</fullName>
    </alternativeName>
    <alternativeName>
        <fullName evidence="1">Undecaprenyl pyrophosphate phosphatase</fullName>
    </alternativeName>
</protein>
<evidence type="ECO:0000255" key="1">
    <source>
        <dbReference type="HAMAP-Rule" id="MF_01006"/>
    </source>
</evidence>
<dbReference type="EC" id="3.6.1.27" evidence="1"/>
<dbReference type="EMBL" id="CP000089">
    <property type="protein sequence ID" value="AAZ48639.1"/>
    <property type="molecule type" value="Genomic_DNA"/>
</dbReference>
<dbReference type="SMR" id="Q478U2"/>
<dbReference type="STRING" id="159087.Daro_3911"/>
<dbReference type="KEGG" id="dar:Daro_3911"/>
<dbReference type="eggNOG" id="COG1968">
    <property type="taxonomic scope" value="Bacteria"/>
</dbReference>
<dbReference type="HOGENOM" id="CLU_060296_2_0_4"/>
<dbReference type="OrthoDB" id="9808289at2"/>
<dbReference type="GO" id="GO:0005886">
    <property type="term" value="C:plasma membrane"/>
    <property type="evidence" value="ECO:0007669"/>
    <property type="project" value="UniProtKB-SubCell"/>
</dbReference>
<dbReference type="GO" id="GO:0050380">
    <property type="term" value="F:undecaprenyl-diphosphatase activity"/>
    <property type="evidence" value="ECO:0007669"/>
    <property type="project" value="UniProtKB-UniRule"/>
</dbReference>
<dbReference type="GO" id="GO:0071555">
    <property type="term" value="P:cell wall organization"/>
    <property type="evidence" value="ECO:0007669"/>
    <property type="project" value="UniProtKB-KW"/>
</dbReference>
<dbReference type="GO" id="GO:0009252">
    <property type="term" value="P:peptidoglycan biosynthetic process"/>
    <property type="evidence" value="ECO:0007669"/>
    <property type="project" value="UniProtKB-KW"/>
</dbReference>
<dbReference type="GO" id="GO:0008360">
    <property type="term" value="P:regulation of cell shape"/>
    <property type="evidence" value="ECO:0007669"/>
    <property type="project" value="UniProtKB-KW"/>
</dbReference>
<dbReference type="GO" id="GO:0046677">
    <property type="term" value="P:response to antibiotic"/>
    <property type="evidence" value="ECO:0007669"/>
    <property type="project" value="UniProtKB-UniRule"/>
</dbReference>
<dbReference type="HAMAP" id="MF_01006">
    <property type="entry name" value="Undec_diphosphatase"/>
    <property type="match status" value="1"/>
</dbReference>
<dbReference type="InterPro" id="IPR003824">
    <property type="entry name" value="UppP"/>
</dbReference>
<dbReference type="NCBIfam" id="NF001389">
    <property type="entry name" value="PRK00281.1-2"/>
    <property type="match status" value="1"/>
</dbReference>
<dbReference type="NCBIfam" id="NF001390">
    <property type="entry name" value="PRK00281.1-4"/>
    <property type="match status" value="1"/>
</dbReference>
<dbReference type="NCBIfam" id="TIGR00753">
    <property type="entry name" value="undec_PP_bacA"/>
    <property type="match status" value="1"/>
</dbReference>
<dbReference type="PANTHER" id="PTHR30622">
    <property type="entry name" value="UNDECAPRENYL-DIPHOSPHATASE"/>
    <property type="match status" value="1"/>
</dbReference>
<dbReference type="PANTHER" id="PTHR30622:SF3">
    <property type="entry name" value="UNDECAPRENYL-DIPHOSPHATASE"/>
    <property type="match status" value="1"/>
</dbReference>
<dbReference type="Pfam" id="PF02673">
    <property type="entry name" value="BacA"/>
    <property type="match status" value="1"/>
</dbReference>
<reference key="1">
    <citation type="journal article" date="2009" name="BMC Genomics">
        <title>Metabolic analysis of the soil microbe Dechloromonas aromatica str. RCB: indications of a surprisingly complex life-style and cryptic anaerobic pathways for aromatic degradation.</title>
        <authorList>
            <person name="Salinero K.K."/>
            <person name="Keller K."/>
            <person name="Feil W.S."/>
            <person name="Feil H."/>
            <person name="Trong S."/>
            <person name="Di Bartolo G."/>
            <person name="Lapidus A."/>
        </authorList>
    </citation>
    <scope>NUCLEOTIDE SEQUENCE [LARGE SCALE GENOMIC DNA]</scope>
    <source>
        <strain>RCB</strain>
    </source>
</reference>
<gene>
    <name evidence="1" type="primary">uppP</name>
    <name type="ordered locus">Daro_3911</name>
</gene>
<organism>
    <name type="scientific">Dechloromonas aromatica (strain RCB)</name>
    <dbReference type="NCBI Taxonomy" id="159087"/>
    <lineage>
        <taxon>Bacteria</taxon>
        <taxon>Pseudomonadati</taxon>
        <taxon>Pseudomonadota</taxon>
        <taxon>Betaproteobacteria</taxon>
        <taxon>Rhodocyclales</taxon>
        <taxon>Azonexaceae</taxon>
        <taxon>Dechloromonas</taxon>
    </lineage>
</organism>
<sequence length="274" mass="30375">MDPILLLKALILGIVEGLTEFLPISSTGHLILAGDLLNFNDDRGKLFEIVIQSGAILAVVWEYRERLLKVARGAFSEPAAQKFILNLFVAFLPLAILGLAFGRAIKAHLFNPVTVASTFILGAFVILWAERREHKIRIQTVDEMSMLDALKLGIAQAFALIPGTSRSGATIIGGLLFGLSRKAATEFSFFLAIPTLIVATFYQLYKERALLNADDLAMWAVGFVAAFVSAFLCVRWLLRYISTHDFTAFAWYRIAFGIVVLATWQFGWVQWAAD</sequence>
<accession>Q478U2</accession>
<comment type="function">
    <text evidence="1">Catalyzes the dephosphorylation of undecaprenyl diphosphate (UPP). Confers resistance to bacitracin.</text>
</comment>
<comment type="catalytic activity">
    <reaction evidence="1">
        <text>di-trans,octa-cis-undecaprenyl diphosphate + H2O = di-trans,octa-cis-undecaprenyl phosphate + phosphate + H(+)</text>
        <dbReference type="Rhea" id="RHEA:28094"/>
        <dbReference type="ChEBI" id="CHEBI:15377"/>
        <dbReference type="ChEBI" id="CHEBI:15378"/>
        <dbReference type="ChEBI" id="CHEBI:43474"/>
        <dbReference type="ChEBI" id="CHEBI:58405"/>
        <dbReference type="ChEBI" id="CHEBI:60392"/>
        <dbReference type="EC" id="3.6.1.27"/>
    </reaction>
</comment>
<comment type="subcellular location">
    <subcellularLocation>
        <location evidence="1">Cell inner membrane</location>
        <topology evidence="1">Multi-pass membrane protein</topology>
    </subcellularLocation>
</comment>
<comment type="miscellaneous">
    <text>Bacitracin is thought to be involved in the inhibition of peptidoglycan synthesis by sequestering undecaprenyl diphosphate, thereby reducing the pool of lipid carrier available.</text>
</comment>
<comment type="similarity">
    <text evidence="1">Belongs to the UppP family.</text>
</comment>
<name>UPPP_DECAR</name>